<organism>
    <name type="scientific">Bos mutus grunniens</name>
    <name type="common">Wild yak</name>
    <name type="synonym">Bos grunniens</name>
    <dbReference type="NCBI Taxonomy" id="30521"/>
    <lineage>
        <taxon>Eukaryota</taxon>
        <taxon>Metazoa</taxon>
        <taxon>Chordata</taxon>
        <taxon>Craniata</taxon>
        <taxon>Vertebrata</taxon>
        <taxon>Euteleostomi</taxon>
        <taxon>Mammalia</taxon>
        <taxon>Eutheria</taxon>
        <taxon>Laurasiatheria</taxon>
        <taxon>Artiodactyla</taxon>
        <taxon>Ruminantia</taxon>
        <taxon>Pecora</taxon>
        <taxon>Bovidae</taxon>
        <taxon>Bovinae</taxon>
        <taxon>Bos</taxon>
    </lineage>
</organism>
<dbReference type="EMBL" id="AY325805">
    <property type="protein sequence ID" value="AAP87309.2"/>
    <property type="molecule type" value="Genomic_DNA"/>
</dbReference>
<dbReference type="EMBL" id="AY684273">
    <property type="protein sequence ID" value="AAU89110.1"/>
    <property type="molecule type" value="Genomic_DNA"/>
</dbReference>
<dbReference type="RefSeq" id="YP_001218795.1">
    <property type="nucleotide sequence ID" value="NC_006380.3"/>
</dbReference>
<dbReference type="SMR" id="Q5Y4Q6"/>
<dbReference type="GeneID" id="3119744"/>
<dbReference type="CTD" id="4509"/>
<dbReference type="Proteomes" id="UP000694520">
    <property type="component" value="Unplaced"/>
</dbReference>
<dbReference type="GO" id="GO:0031966">
    <property type="term" value="C:mitochondrial membrane"/>
    <property type="evidence" value="ECO:0007669"/>
    <property type="project" value="UniProtKB-SubCell"/>
</dbReference>
<dbReference type="GO" id="GO:0045259">
    <property type="term" value="C:proton-transporting ATP synthase complex"/>
    <property type="evidence" value="ECO:0000250"/>
    <property type="project" value="UniProtKB"/>
</dbReference>
<dbReference type="GO" id="GO:0015078">
    <property type="term" value="F:proton transmembrane transporter activity"/>
    <property type="evidence" value="ECO:0007669"/>
    <property type="project" value="InterPro"/>
</dbReference>
<dbReference type="GO" id="GO:0015986">
    <property type="term" value="P:proton motive force-driven ATP synthesis"/>
    <property type="evidence" value="ECO:0007669"/>
    <property type="project" value="InterPro"/>
</dbReference>
<dbReference type="InterPro" id="IPR039017">
    <property type="entry name" value="ATP8_mammal"/>
</dbReference>
<dbReference type="InterPro" id="IPR001421">
    <property type="entry name" value="ATP8_metazoa"/>
</dbReference>
<dbReference type="PANTHER" id="PTHR13722">
    <property type="entry name" value="ATP SYNTHASE PROTEIN 8"/>
    <property type="match status" value="1"/>
</dbReference>
<dbReference type="PANTHER" id="PTHR13722:SF0">
    <property type="entry name" value="ATP SYNTHASE PROTEIN 8"/>
    <property type="match status" value="1"/>
</dbReference>
<dbReference type="Pfam" id="PF00895">
    <property type="entry name" value="ATP-synt_8"/>
    <property type="match status" value="1"/>
</dbReference>
<proteinExistence type="inferred from homology"/>
<protein>
    <recommendedName>
        <fullName evidence="1">ATP synthase F(0) complex subunit 8</fullName>
    </recommendedName>
    <alternativeName>
        <fullName>A6L</fullName>
    </alternativeName>
    <alternativeName>
        <fullName>F-ATPase subunit 8</fullName>
    </alternativeName>
</protein>
<name>ATP8_BOSMU</name>
<keyword id="KW-0007">Acetylation</keyword>
<keyword id="KW-0066">ATP synthesis</keyword>
<keyword id="KW-0138">CF(0)</keyword>
<keyword id="KW-0375">Hydrogen ion transport</keyword>
<keyword id="KW-0406">Ion transport</keyword>
<keyword id="KW-0472">Membrane</keyword>
<keyword id="KW-0496">Mitochondrion</keyword>
<keyword id="KW-1185">Reference proteome</keyword>
<keyword id="KW-0812">Transmembrane</keyword>
<keyword id="KW-1133">Transmembrane helix</keyword>
<keyword id="KW-0813">Transport</keyword>
<geneLocation type="mitochondrion"/>
<evidence type="ECO:0000250" key="1">
    <source>
        <dbReference type="UniProtKB" id="P03928"/>
    </source>
</evidence>
<evidence type="ECO:0000250" key="2">
    <source>
        <dbReference type="UniProtKB" id="P03930"/>
    </source>
</evidence>
<evidence type="ECO:0000250" key="3">
    <source>
        <dbReference type="UniProtKB" id="P19483"/>
    </source>
</evidence>
<evidence type="ECO:0000255" key="4"/>
<evidence type="ECO:0000305" key="5"/>
<reference key="1">
    <citation type="submission" date="2006-04" db="EMBL/GenBank/DDBJ databases">
        <title>Cloning of Yak mtDNA ATPase 8 and ATPase 6.</title>
        <authorList>
            <person name="Zhao X."/>
            <person name="Li Q."/>
            <person name="Li N."/>
        </authorList>
    </citation>
    <scope>NUCLEOTIDE SEQUENCE [GENOMIC DNA]</scope>
</reference>
<reference key="2">
    <citation type="submission" date="2004-10" db="EMBL/GenBank/DDBJ databases">
        <title>Complete sequence of the Yak (Bos grunniens.) mitochondrial genome and its genetic relationship with related species.</title>
        <authorList>
            <person name="Gu Z."/>
            <person name="Zhao X."/>
            <person name="Li N."/>
            <person name="Wu C."/>
        </authorList>
    </citation>
    <scope>NUCLEOTIDE SEQUENCE [GENOMIC DNA]</scope>
</reference>
<feature type="chain" id="PRO_0000253506" description="ATP synthase F(0) complex subunit 8">
    <location>
        <begin position="1"/>
        <end position="66"/>
    </location>
</feature>
<feature type="transmembrane region" description="Helical" evidence="4">
    <location>
        <begin position="8"/>
        <end position="24"/>
    </location>
</feature>
<feature type="modified residue" description="N6-acetyllysine; alternate" evidence="2">
    <location>
        <position position="54"/>
    </location>
</feature>
<feature type="modified residue" description="N6-succinyllysine; alternate" evidence="2">
    <location>
        <position position="54"/>
    </location>
</feature>
<feature type="modified residue" description="N6-acetyllysine" evidence="2">
    <location>
        <position position="57"/>
    </location>
</feature>
<feature type="sequence conflict" description="In Ref. 1; AAP87309." evidence="5" ref="1">
    <original>E</original>
    <variation>K</variation>
    <location>
        <position position="38"/>
    </location>
</feature>
<feature type="sequence conflict" description="In Ref. 1; AAP87309." evidence="5" ref="1">
    <original>E</original>
    <variation>K</variation>
    <location>
        <position position="52"/>
    </location>
</feature>
<gene>
    <name evidence="1" type="primary">MT-ATP8</name>
    <name type="synonym">ATP8</name>
    <name type="synonym">ATPASE8</name>
    <name type="synonym">MTATP8</name>
</gene>
<sequence>MPQLDTSTWLTMILSMFLTLFIIFQLKISKHNFYYNPELTSTKMLKQNTPWETKWTKIYLPLLLPL</sequence>
<comment type="function">
    <text evidence="1 3">Subunit 8, of the mitochondrial membrane ATP synthase complex (F(1)F(0) ATP synthase or Complex V) that produces ATP from ADP in the presence of a proton gradient across the membrane which is generated by electron transport complexes of the respiratory chain. ATP synthase complex consist of a soluble F(1) head domain - the catalytic core - and a membrane F(1) domain - the membrane proton channel. These two domains are linked by a central stalk rotating inside the F(1) region and a stationary peripheral stalk. During catalysis, ATP synthesis in the catalytic domain of F(1) is coupled via a rotary mechanism of the central stalk subunits to proton translocation (By similarity). In vivo, can only synthesize ATP although its ATP hydrolase activity can be activated artificially in vitro (By similarity). Part of the complex F(0) domain (By similarity).</text>
</comment>
<comment type="subunit">
    <text evidence="1">Component of the ATP synthase complex composed at least of ATP5F1A/subunit alpha, ATP5F1B/subunit beta, ATP5MC1/subunit c (homooctomer), MT-ATP6/subunit a, MT-ATP8/subunit 8, ATP5ME/subunit e, ATP5MF/subunit f, ATP5MG/subunit g, ATP5MK/subunit k, ATP5MJ/subunit j, ATP5F1C/subunit gamma, ATP5F1D/subunit delta, ATP5F1E/subunit epsilon, ATP5PF/subunit F6, ATP5PB/subunit b, ATP5PD/subunit d, ATP5PO/subunit OSCP. ATP synthase complex consists of a soluble F(1) head domain (subunits alpha(3) and beta(3)) - the catalytic core - and a membrane F(0) domain - the membrane proton channel (subunits c, a, 8, e, f, g, k and j). These two domains are linked by a central stalk (subunits gamma, delta, and epsilon) rotating inside the F1 region and a stationary peripheral stalk (subunits F6, b, d, and OSCP). Interacts with PRICKLE3.</text>
</comment>
<comment type="subcellular location">
    <subcellularLocation>
        <location>Mitochondrion membrane</location>
        <topology>Single-pass membrane protein</topology>
    </subcellularLocation>
</comment>
<comment type="similarity">
    <text evidence="5">Belongs to the ATPase protein 8 family.</text>
</comment>
<accession>Q5Y4Q6</accession>
<accession>Q6VUQ7</accession>